<accession>O31427</accession>
<accession>Q7DL62</accession>
<sequence length="239" mass="26894">MQLMQVQNLSKCYRNGDGVEHLSFSIQRGEIVALLGPNGAGKTTTIRCLTGLYKPDKGDILIEGSPPGDINVQKKVALIPDQPYLYPALTAAEHIQFRARGYHPGKKDVKERVYHALKEVHLEEKANQLCGQLSRGQKQRVVLAGAIVQDALLYILDEPTVGLDIPSKQWLSNWLKTKTDQGCSAFVSTHSLEFVIETADRVILIRDGKLMQDLYVPQFEEQAEWRKEVIRLLGEWSDE</sequence>
<feature type="chain" id="PRO_0000312739" description="SkfA peptide export ATP-binding protein SkfE">
    <location>
        <begin position="1"/>
        <end position="239"/>
    </location>
</feature>
<feature type="domain" description="ABC transporter" evidence="2">
    <location>
        <begin position="4"/>
        <end position="232"/>
    </location>
</feature>
<feature type="binding site" evidence="2">
    <location>
        <begin position="36"/>
        <end position="43"/>
    </location>
    <ligand>
        <name>ATP</name>
        <dbReference type="ChEBI" id="CHEBI:30616"/>
    </ligand>
</feature>
<reference key="1">
    <citation type="submission" date="1997-07" db="EMBL/GenBank/DDBJ databases">
        <title>Sequence analysis of the 70kb region between 17 and 23 degree of the Bacillus subtilis chromosome.</title>
        <authorList>
            <person name="Haga K."/>
            <person name="Liu H."/>
            <person name="Yasumoto K."/>
            <person name="Takahashi H."/>
            <person name="Yoshikawa H."/>
        </authorList>
    </citation>
    <scope>NUCLEOTIDE SEQUENCE [GENOMIC DNA]</scope>
    <source>
        <strain>168</strain>
    </source>
</reference>
<reference key="2">
    <citation type="journal article" date="1997" name="Nature">
        <title>The complete genome sequence of the Gram-positive bacterium Bacillus subtilis.</title>
        <authorList>
            <person name="Kunst F."/>
            <person name="Ogasawara N."/>
            <person name="Moszer I."/>
            <person name="Albertini A.M."/>
            <person name="Alloni G."/>
            <person name="Azevedo V."/>
            <person name="Bertero M.G."/>
            <person name="Bessieres P."/>
            <person name="Bolotin A."/>
            <person name="Borchert S."/>
            <person name="Borriss R."/>
            <person name="Boursier L."/>
            <person name="Brans A."/>
            <person name="Braun M."/>
            <person name="Brignell S.C."/>
            <person name="Bron S."/>
            <person name="Brouillet S."/>
            <person name="Bruschi C.V."/>
            <person name="Caldwell B."/>
            <person name="Capuano V."/>
            <person name="Carter N.M."/>
            <person name="Choi S.-K."/>
            <person name="Codani J.-J."/>
            <person name="Connerton I.F."/>
            <person name="Cummings N.J."/>
            <person name="Daniel R.A."/>
            <person name="Denizot F."/>
            <person name="Devine K.M."/>
            <person name="Duesterhoeft A."/>
            <person name="Ehrlich S.D."/>
            <person name="Emmerson P.T."/>
            <person name="Entian K.-D."/>
            <person name="Errington J."/>
            <person name="Fabret C."/>
            <person name="Ferrari E."/>
            <person name="Foulger D."/>
            <person name="Fritz C."/>
            <person name="Fujita M."/>
            <person name="Fujita Y."/>
            <person name="Fuma S."/>
            <person name="Galizzi A."/>
            <person name="Galleron N."/>
            <person name="Ghim S.-Y."/>
            <person name="Glaser P."/>
            <person name="Goffeau A."/>
            <person name="Golightly E.J."/>
            <person name="Grandi G."/>
            <person name="Guiseppi G."/>
            <person name="Guy B.J."/>
            <person name="Haga K."/>
            <person name="Haiech J."/>
            <person name="Harwood C.R."/>
            <person name="Henaut A."/>
            <person name="Hilbert H."/>
            <person name="Holsappel S."/>
            <person name="Hosono S."/>
            <person name="Hullo M.-F."/>
            <person name="Itaya M."/>
            <person name="Jones L.-M."/>
            <person name="Joris B."/>
            <person name="Karamata D."/>
            <person name="Kasahara Y."/>
            <person name="Klaerr-Blanchard M."/>
            <person name="Klein C."/>
            <person name="Kobayashi Y."/>
            <person name="Koetter P."/>
            <person name="Koningstein G."/>
            <person name="Krogh S."/>
            <person name="Kumano M."/>
            <person name="Kurita K."/>
            <person name="Lapidus A."/>
            <person name="Lardinois S."/>
            <person name="Lauber J."/>
            <person name="Lazarevic V."/>
            <person name="Lee S.-M."/>
            <person name="Levine A."/>
            <person name="Liu H."/>
            <person name="Masuda S."/>
            <person name="Mauel C."/>
            <person name="Medigue C."/>
            <person name="Medina N."/>
            <person name="Mellado R.P."/>
            <person name="Mizuno M."/>
            <person name="Moestl D."/>
            <person name="Nakai S."/>
            <person name="Noback M."/>
            <person name="Noone D."/>
            <person name="O'Reilly M."/>
            <person name="Ogawa K."/>
            <person name="Ogiwara A."/>
            <person name="Oudega B."/>
            <person name="Park S.-H."/>
            <person name="Parro V."/>
            <person name="Pohl T.M."/>
            <person name="Portetelle D."/>
            <person name="Porwollik S."/>
            <person name="Prescott A.M."/>
            <person name="Presecan E."/>
            <person name="Pujic P."/>
            <person name="Purnelle B."/>
            <person name="Rapoport G."/>
            <person name="Rey M."/>
            <person name="Reynolds S."/>
            <person name="Rieger M."/>
            <person name="Rivolta C."/>
            <person name="Rocha E."/>
            <person name="Roche B."/>
            <person name="Rose M."/>
            <person name="Sadaie Y."/>
            <person name="Sato T."/>
            <person name="Scanlan E."/>
            <person name="Schleich S."/>
            <person name="Schroeter R."/>
            <person name="Scoffone F."/>
            <person name="Sekiguchi J."/>
            <person name="Sekowska A."/>
            <person name="Seror S.J."/>
            <person name="Serror P."/>
            <person name="Shin B.-S."/>
            <person name="Soldo B."/>
            <person name="Sorokin A."/>
            <person name="Tacconi E."/>
            <person name="Takagi T."/>
            <person name="Takahashi H."/>
            <person name="Takemaru K."/>
            <person name="Takeuchi M."/>
            <person name="Tamakoshi A."/>
            <person name="Tanaka T."/>
            <person name="Terpstra P."/>
            <person name="Tognoni A."/>
            <person name="Tosato V."/>
            <person name="Uchiyama S."/>
            <person name="Vandenbol M."/>
            <person name="Vannier F."/>
            <person name="Vassarotti A."/>
            <person name="Viari A."/>
            <person name="Wambutt R."/>
            <person name="Wedler E."/>
            <person name="Wedler H."/>
            <person name="Weitzenegger T."/>
            <person name="Winters P."/>
            <person name="Wipat A."/>
            <person name="Yamamoto H."/>
            <person name="Yamane K."/>
            <person name="Yasumoto K."/>
            <person name="Yata K."/>
            <person name="Yoshida K."/>
            <person name="Yoshikawa H.-F."/>
            <person name="Zumstein E."/>
            <person name="Yoshikawa H."/>
            <person name="Danchin A."/>
        </authorList>
    </citation>
    <scope>NUCLEOTIDE SEQUENCE [LARGE SCALE GENOMIC DNA]</scope>
    <source>
        <strain>168</strain>
    </source>
</reference>
<reference key="3">
    <citation type="journal article" date="2003" name="Science">
        <title>Cannibalism by sporulating bacteria.</title>
        <authorList>
            <person name="Gonzalez-Pastor J.E."/>
            <person name="Hobbs E.C."/>
            <person name="Losick R."/>
        </authorList>
    </citation>
    <scope>POSSIBLE FUNCTION IN SKFA SYNTHESIS</scope>
    <scope>INDUCTION</scope>
    <scope>DISRUPTION PHENOTYPE</scope>
    <source>
        <strain>168 / PY79</strain>
    </source>
</reference>
<reference key="4">
    <citation type="journal article" date="2007" name="J. Bacteriol.">
        <title>Abh and AbrB control of Bacillus subtilis antimicrobial gene expression.</title>
        <authorList>
            <person name="Strauch M.A."/>
            <person name="Bobay B.G."/>
            <person name="Cavanagh J."/>
            <person name="Yao F."/>
            <person name="Wilson A."/>
            <person name="Le Breton Y."/>
        </authorList>
    </citation>
    <scope>REPRESSION BY ABRB AND ABH</scope>
</reference>
<protein>
    <recommendedName>
        <fullName>SkfA peptide export ATP-binding protein SkfE</fullName>
        <ecNumber>7.3.2.3</ecNumber>
    </recommendedName>
</protein>
<keyword id="KW-0045">Antibiotic biosynthesis</keyword>
<keyword id="KW-0067">ATP-binding</keyword>
<keyword id="KW-0871">Bacteriocin biosynthesis</keyword>
<keyword id="KW-1003">Cell membrane</keyword>
<keyword id="KW-0472">Membrane</keyword>
<keyword id="KW-0547">Nucleotide-binding</keyword>
<keyword id="KW-1185">Reference proteome</keyword>
<keyword id="KW-1278">Translocase</keyword>
<keyword id="KW-0813">Transport</keyword>
<evidence type="ECO:0000250" key="1"/>
<evidence type="ECO:0000255" key="2">
    <source>
        <dbReference type="PROSITE-ProRule" id="PRU00434"/>
    </source>
</evidence>
<evidence type="ECO:0000269" key="3">
    <source>
    </source>
</evidence>
<evidence type="ECO:0000269" key="4">
    <source>
    </source>
</evidence>
<evidence type="ECO:0000303" key="5">
    <source>
    </source>
</evidence>
<evidence type="ECO:0000305" key="6"/>
<evidence type="ECO:0000305" key="7">
    <source>
    </source>
</evidence>
<proteinExistence type="evidence at protein level"/>
<comment type="function">
    <text evidence="7">Probably part of the ABC transporter SkfEF involved in the export of the bacteriocin SKF. Probably responsible for energy coupling to the transport system.</text>
</comment>
<comment type="catalytic activity">
    <reaction evidence="6">
        <text>sulfate(out) + ATP + H2O = sulfate(in) + ADP + phosphate + H(+)</text>
        <dbReference type="Rhea" id="RHEA:10192"/>
        <dbReference type="ChEBI" id="CHEBI:15377"/>
        <dbReference type="ChEBI" id="CHEBI:15378"/>
        <dbReference type="ChEBI" id="CHEBI:16189"/>
        <dbReference type="ChEBI" id="CHEBI:30616"/>
        <dbReference type="ChEBI" id="CHEBI:43474"/>
        <dbReference type="ChEBI" id="CHEBI:456216"/>
        <dbReference type="EC" id="7.3.2.3"/>
    </reaction>
</comment>
<comment type="catalytic activity">
    <reaction evidence="6">
        <text>thiosulfate(out) + ATP + H2O = thiosulfate(in) + ADP + phosphate + H(+)</text>
        <dbReference type="Rhea" id="RHEA:29871"/>
        <dbReference type="ChEBI" id="CHEBI:15377"/>
        <dbReference type="ChEBI" id="CHEBI:15378"/>
        <dbReference type="ChEBI" id="CHEBI:30616"/>
        <dbReference type="ChEBI" id="CHEBI:33542"/>
        <dbReference type="ChEBI" id="CHEBI:43474"/>
        <dbReference type="ChEBI" id="CHEBI:456216"/>
        <dbReference type="EC" id="7.3.2.3"/>
    </reaction>
</comment>
<comment type="subcellular location">
    <subcellularLocation>
        <location evidence="1">Cell membrane</location>
        <topology evidence="1">Peripheral membrane protein</topology>
    </subcellularLocation>
</comment>
<comment type="induction">
    <text evidence="3 4">By Spo0A (PubMed:12817086) and PhoP, during nutrient starvation, especially phosphate starvation. Repressed by AbrB during normal growth when nutrients are plentiful, in association with the transcriptional repressor Abh.</text>
</comment>
<comment type="disruption phenotype">
    <text evidence="3">When the skfA-skfB-skfC-skfE-skfF-skfG-skfH operon is deleted, increased rate of spore formation; a double operon deletion (sdpA-sdpC plus skfA-skfH) makes spores even faster (PubMed:12817086).</text>
</comment>
<comment type="miscellaneous">
    <text evidence="3">Accelerated cannibalism by skf- cells is seen on solid media but not in liquid media.</text>
</comment>
<comment type="similarity">
    <text evidence="6">Belongs to the ABC transporter superfamily. SkfA peptide export (TC 3.A.1.128.1) family.</text>
</comment>
<dbReference type="EC" id="7.3.2.3"/>
<dbReference type="EMBL" id="AB006424">
    <property type="protein sequence ID" value="BAA33092.1"/>
    <property type="molecule type" value="Genomic_DNA"/>
</dbReference>
<dbReference type="EMBL" id="AL009126">
    <property type="protein sequence ID" value="CAB11989.1"/>
    <property type="molecule type" value="Genomic_DNA"/>
</dbReference>
<dbReference type="PIR" id="H69746">
    <property type="entry name" value="H69746"/>
</dbReference>
<dbReference type="RefSeq" id="NP_388077.1">
    <property type="nucleotide sequence ID" value="NC_000964.3"/>
</dbReference>
<dbReference type="RefSeq" id="WP_003234899.1">
    <property type="nucleotide sequence ID" value="NZ_OZ025638.1"/>
</dbReference>
<dbReference type="SMR" id="O31427"/>
<dbReference type="FunCoup" id="O31427">
    <property type="interactions" value="118"/>
</dbReference>
<dbReference type="STRING" id="224308.BSU01950"/>
<dbReference type="TCDB" id="3.A.1.128.1">
    <property type="family name" value="the atp-binding cassette (abc) superfamily"/>
</dbReference>
<dbReference type="PaxDb" id="224308-BSU01950"/>
<dbReference type="EnsemblBacteria" id="CAB11989">
    <property type="protein sequence ID" value="CAB11989"/>
    <property type="gene ID" value="BSU_01950"/>
</dbReference>
<dbReference type="GeneID" id="938498"/>
<dbReference type="KEGG" id="bsu:BSU01950"/>
<dbReference type="PATRIC" id="fig|224308.179.peg.201"/>
<dbReference type="eggNOG" id="COG1131">
    <property type="taxonomic scope" value="Bacteria"/>
</dbReference>
<dbReference type="InParanoid" id="O31427"/>
<dbReference type="OrthoDB" id="9804819at2"/>
<dbReference type="PhylomeDB" id="O31427"/>
<dbReference type="BioCyc" id="BSUB:BSU01950-MONOMER"/>
<dbReference type="Proteomes" id="UP000001570">
    <property type="component" value="Chromosome"/>
</dbReference>
<dbReference type="GO" id="GO:0005886">
    <property type="term" value="C:plasma membrane"/>
    <property type="evidence" value="ECO:0007669"/>
    <property type="project" value="UniProtKB-SubCell"/>
</dbReference>
<dbReference type="GO" id="GO:0015419">
    <property type="term" value="F:ABC-type sulfate transporter activity"/>
    <property type="evidence" value="ECO:0007669"/>
    <property type="project" value="RHEA"/>
</dbReference>
<dbReference type="GO" id="GO:0102025">
    <property type="term" value="F:ABC-type thiosulfate transporter activity"/>
    <property type="evidence" value="ECO:0007669"/>
    <property type="project" value="RHEA"/>
</dbReference>
<dbReference type="GO" id="GO:0005524">
    <property type="term" value="F:ATP binding"/>
    <property type="evidence" value="ECO:0007669"/>
    <property type="project" value="UniProtKB-KW"/>
</dbReference>
<dbReference type="GO" id="GO:0016887">
    <property type="term" value="F:ATP hydrolysis activity"/>
    <property type="evidence" value="ECO:0007669"/>
    <property type="project" value="InterPro"/>
</dbReference>
<dbReference type="GO" id="GO:0030152">
    <property type="term" value="P:bacteriocin biosynthetic process"/>
    <property type="evidence" value="ECO:0007669"/>
    <property type="project" value="UniProtKB-KW"/>
</dbReference>
<dbReference type="CDD" id="cd03230">
    <property type="entry name" value="ABC_DR_subfamily_A"/>
    <property type="match status" value="1"/>
</dbReference>
<dbReference type="Gene3D" id="3.40.50.300">
    <property type="entry name" value="P-loop containing nucleotide triphosphate hydrolases"/>
    <property type="match status" value="1"/>
</dbReference>
<dbReference type="InterPro" id="IPR003593">
    <property type="entry name" value="AAA+_ATPase"/>
</dbReference>
<dbReference type="InterPro" id="IPR003439">
    <property type="entry name" value="ABC_transporter-like_ATP-bd"/>
</dbReference>
<dbReference type="InterPro" id="IPR051782">
    <property type="entry name" value="ABC_Transporter_VariousFunc"/>
</dbReference>
<dbReference type="InterPro" id="IPR027417">
    <property type="entry name" value="P-loop_NTPase"/>
</dbReference>
<dbReference type="PANTHER" id="PTHR42939">
    <property type="entry name" value="ABC TRANSPORTER ATP-BINDING PROTEIN ALBC-RELATED"/>
    <property type="match status" value="1"/>
</dbReference>
<dbReference type="PANTHER" id="PTHR42939:SF1">
    <property type="entry name" value="ABC TRANSPORTER ATP-BINDING PROTEIN ALBC-RELATED"/>
    <property type="match status" value="1"/>
</dbReference>
<dbReference type="Pfam" id="PF00005">
    <property type="entry name" value="ABC_tran"/>
    <property type="match status" value="1"/>
</dbReference>
<dbReference type="SMART" id="SM00382">
    <property type="entry name" value="AAA"/>
    <property type="match status" value="1"/>
</dbReference>
<dbReference type="SUPFAM" id="SSF52540">
    <property type="entry name" value="P-loop containing nucleoside triphosphate hydrolases"/>
    <property type="match status" value="1"/>
</dbReference>
<dbReference type="PROSITE" id="PS50893">
    <property type="entry name" value="ABC_TRANSPORTER_2"/>
    <property type="match status" value="1"/>
</dbReference>
<gene>
    <name evidence="5" type="primary">skfE</name>
    <name type="synonym">ybdA</name>
    <name type="ordered locus">BSU01950</name>
</gene>
<organism>
    <name type="scientific">Bacillus subtilis (strain 168)</name>
    <dbReference type="NCBI Taxonomy" id="224308"/>
    <lineage>
        <taxon>Bacteria</taxon>
        <taxon>Bacillati</taxon>
        <taxon>Bacillota</taxon>
        <taxon>Bacilli</taxon>
        <taxon>Bacillales</taxon>
        <taxon>Bacillaceae</taxon>
        <taxon>Bacillus</taxon>
    </lineage>
</organism>
<name>SKFE_BACSU</name>